<keyword id="KW-0028">Amino-acid biosynthesis</keyword>
<keyword id="KW-0963">Cytoplasm</keyword>
<keyword id="KW-0456">Lyase</keyword>
<keyword id="KW-0479">Metal-binding</keyword>
<keyword id="KW-0486">Methionine biosynthesis</keyword>
<keyword id="KW-1185">Reference proteome</keyword>
<keyword id="KW-0862">Zinc</keyword>
<name>MTNB_SCHJY</name>
<reference key="1">
    <citation type="journal article" date="2011" name="Science">
        <title>Comparative functional genomics of the fission yeasts.</title>
        <authorList>
            <person name="Rhind N."/>
            <person name="Chen Z."/>
            <person name="Yassour M."/>
            <person name="Thompson D.A."/>
            <person name="Haas B.J."/>
            <person name="Habib N."/>
            <person name="Wapinski I."/>
            <person name="Roy S."/>
            <person name="Lin M.F."/>
            <person name="Heiman D.I."/>
            <person name="Young S.K."/>
            <person name="Furuya K."/>
            <person name="Guo Y."/>
            <person name="Pidoux A."/>
            <person name="Chen H.M."/>
            <person name="Robbertse B."/>
            <person name="Goldberg J.M."/>
            <person name="Aoki K."/>
            <person name="Bayne E.H."/>
            <person name="Berlin A.M."/>
            <person name="Desjardins C.A."/>
            <person name="Dobbs E."/>
            <person name="Dukaj L."/>
            <person name="Fan L."/>
            <person name="FitzGerald M.G."/>
            <person name="French C."/>
            <person name="Gujja S."/>
            <person name="Hansen K."/>
            <person name="Keifenheim D."/>
            <person name="Levin J.Z."/>
            <person name="Mosher R.A."/>
            <person name="Mueller C.A."/>
            <person name="Pfiffner J."/>
            <person name="Priest M."/>
            <person name="Russ C."/>
            <person name="Smialowska A."/>
            <person name="Swoboda P."/>
            <person name="Sykes S.M."/>
            <person name="Vaughn M."/>
            <person name="Vengrova S."/>
            <person name="Yoder R."/>
            <person name="Zeng Q."/>
            <person name="Allshire R."/>
            <person name="Baulcombe D."/>
            <person name="Birren B.W."/>
            <person name="Brown W."/>
            <person name="Ekwall K."/>
            <person name="Kellis M."/>
            <person name="Leatherwood J."/>
            <person name="Levin H."/>
            <person name="Margalit H."/>
            <person name="Martienssen R."/>
            <person name="Nieduszynski C.A."/>
            <person name="Spatafora J.W."/>
            <person name="Friedman N."/>
            <person name="Dalgaard J.Z."/>
            <person name="Baumann P."/>
            <person name="Niki H."/>
            <person name="Regev A."/>
            <person name="Nusbaum C."/>
        </authorList>
    </citation>
    <scope>NUCLEOTIDE SEQUENCE [LARGE SCALE GENOMIC DNA]</scope>
    <source>
        <strain>yFS275 / FY16936</strain>
    </source>
</reference>
<sequence>MAAAKEKSDVLVNNEIHNCAELICSICRQLYKSGWVTGTGGGITIRTGDHIVIAPSGVQKEKLEVKDMFVMSLTTRDYLHTPKQNSKPSQCTPLFLSVYTSRDAYACIHTHSQEAVLLSNLFAQKTHFESSGFDVQRYIPRGSKKNGFYKFEDTIRIPFINNTAHESDLQSNLQKAINENPYTCAVIVRNHGIYAWGDSWEDAKMNTEAVEYLFHVFLRDYRIKHSKNCRFF</sequence>
<gene>
    <name evidence="1" type="primary">mde1</name>
    <name type="ORF">SJAG_02689</name>
</gene>
<protein>
    <recommendedName>
        <fullName evidence="1">Methylthioribulose-1-phosphate dehydratase</fullName>
        <shortName evidence="1">MTRu-1-P dehydratase</shortName>
        <ecNumber evidence="1">4.2.1.109</ecNumber>
    </recommendedName>
</protein>
<organism>
    <name type="scientific">Schizosaccharomyces japonicus (strain yFS275 / FY16936)</name>
    <name type="common">Fission yeast</name>
    <dbReference type="NCBI Taxonomy" id="402676"/>
    <lineage>
        <taxon>Eukaryota</taxon>
        <taxon>Fungi</taxon>
        <taxon>Dikarya</taxon>
        <taxon>Ascomycota</taxon>
        <taxon>Taphrinomycotina</taxon>
        <taxon>Schizosaccharomycetes</taxon>
        <taxon>Schizosaccharomycetales</taxon>
        <taxon>Schizosaccharomycetaceae</taxon>
        <taxon>Schizosaccharomyces</taxon>
    </lineage>
</organism>
<comment type="function">
    <text evidence="1">Catalyzes the dehydration of methylthioribulose-1-phosphate (MTRu-1-P) into 2,3-diketo-5-methylthiopentyl-1-phosphate (DK-MTP-1-P).</text>
</comment>
<comment type="catalytic activity">
    <reaction evidence="1">
        <text>5-(methylsulfanyl)-D-ribulose 1-phosphate = 5-methylsulfanyl-2,3-dioxopentyl phosphate + H2O</text>
        <dbReference type="Rhea" id="RHEA:15549"/>
        <dbReference type="ChEBI" id="CHEBI:15377"/>
        <dbReference type="ChEBI" id="CHEBI:58548"/>
        <dbReference type="ChEBI" id="CHEBI:58828"/>
        <dbReference type="EC" id="4.2.1.109"/>
    </reaction>
</comment>
<comment type="cofactor">
    <cofactor evidence="1">
        <name>Zn(2+)</name>
        <dbReference type="ChEBI" id="CHEBI:29105"/>
    </cofactor>
    <text evidence="1">Binds 1 zinc ion per subunit.</text>
</comment>
<comment type="pathway">
    <text evidence="1">Amino-acid biosynthesis; L-methionine biosynthesis via salvage pathway; L-methionine from S-methyl-5-thio-alpha-D-ribose 1-phosphate: step 2/6.</text>
</comment>
<comment type="subcellular location">
    <subcellularLocation>
        <location evidence="1">Cytoplasm</location>
    </subcellularLocation>
</comment>
<comment type="similarity">
    <text evidence="1">Belongs to the aldolase class II family. MtnB subfamily.</text>
</comment>
<feature type="chain" id="PRO_0000393850" description="Methylthioribulose-1-phosphate dehydratase">
    <location>
        <begin position="1"/>
        <end position="232"/>
    </location>
</feature>
<feature type="binding site" evidence="1">
    <location>
        <position position="91"/>
    </location>
    <ligand>
        <name>substrate</name>
    </ligand>
</feature>
<feature type="binding site" evidence="1">
    <location>
        <position position="109"/>
    </location>
    <ligand>
        <name>Zn(2+)</name>
        <dbReference type="ChEBI" id="CHEBI:29105"/>
    </ligand>
</feature>
<feature type="binding site" evidence="1">
    <location>
        <position position="111"/>
    </location>
    <ligand>
        <name>Zn(2+)</name>
        <dbReference type="ChEBI" id="CHEBI:29105"/>
    </ligand>
</feature>
<feature type="binding site" evidence="1">
    <location>
        <position position="191"/>
    </location>
    <ligand>
        <name>Zn(2+)</name>
        <dbReference type="ChEBI" id="CHEBI:29105"/>
    </ligand>
</feature>
<dbReference type="EC" id="4.2.1.109" evidence="1"/>
<dbReference type="EMBL" id="KE651166">
    <property type="protein sequence ID" value="EEB07592.1"/>
    <property type="molecule type" value="Genomic_DNA"/>
</dbReference>
<dbReference type="RefSeq" id="XP_002173885.1">
    <property type="nucleotide sequence ID" value="XM_002173849.1"/>
</dbReference>
<dbReference type="SMR" id="B6K0X1"/>
<dbReference type="STRING" id="402676.B6K0X1"/>
<dbReference type="EnsemblFungi" id="EEB07592">
    <property type="protein sequence ID" value="EEB07592"/>
    <property type="gene ID" value="SJAG_02689"/>
</dbReference>
<dbReference type="GeneID" id="7051068"/>
<dbReference type="JaponicusDB" id="SJAG_02689">
    <property type="gene designation" value="mde1"/>
</dbReference>
<dbReference type="VEuPathDB" id="FungiDB:SJAG_02689"/>
<dbReference type="eggNOG" id="KOG2631">
    <property type="taxonomic scope" value="Eukaryota"/>
</dbReference>
<dbReference type="HOGENOM" id="CLU_006033_4_0_1"/>
<dbReference type="OMA" id="WFPGTSG"/>
<dbReference type="OrthoDB" id="191080at2759"/>
<dbReference type="UniPathway" id="UPA00904">
    <property type="reaction ID" value="UER00875"/>
</dbReference>
<dbReference type="Proteomes" id="UP000001744">
    <property type="component" value="Unassembled WGS sequence"/>
</dbReference>
<dbReference type="GO" id="GO:0005737">
    <property type="term" value="C:cytoplasm"/>
    <property type="evidence" value="ECO:0000318"/>
    <property type="project" value="GO_Central"/>
</dbReference>
<dbReference type="GO" id="GO:0046570">
    <property type="term" value="F:methylthioribulose 1-phosphate dehydratase activity"/>
    <property type="evidence" value="ECO:0000318"/>
    <property type="project" value="GO_Central"/>
</dbReference>
<dbReference type="GO" id="GO:0008270">
    <property type="term" value="F:zinc ion binding"/>
    <property type="evidence" value="ECO:0007669"/>
    <property type="project" value="UniProtKB-UniRule"/>
</dbReference>
<dbReference type="GO" id="GO:0019509">
    <property type="term" value="P:L-methionine salvage from methylthioadenosine"/>
    <property type="evidence" value="ECO:0000318"/>
    <property type="project" value="GO_Central"/>
</dbReference>
<dbReference type="FunFam" id="3.40.225.10:FF:000003">
    <property type="entry name" value="Methylthioribulose-1-phosphate dehydratase"/>
    <property type="match status" value="1"/>
</dbReference>
<dbReference type="Gene3D" id="3.40.225.10">
    <property type="entry name" value="Class II aldolase/adducin N-terminal domain"/>
    <property type="match status" value="1"/>
</dbReference>
<dbReference type="HAMAP" id="MF_03116">
    <property type="entry name" value="Salvage_MtnB_euk"/>
    <property type="match status" value="1"/>
</dbReference>
<dbReference type="InterPro" id="IPR001303">
    <property type="entry name" value="Aldolase_II/adducin_N"/>
</dbReference>
<dbReference type="InterPro" id="IPR036409">
    <property type="entry name" value="Aldolase_II/adducin_N_sf"/>
</dbReference>
<dbReference type="InterPro" id="IPR017714">
    <property type="entry name" value="MethylthioRu-1-P_deHdtase_MtnB"/>
</dbReference>
<dbReference type="InterPro" id="IPR027514">
    <property type="entry name" value="Salvage_MtnB_euk"/>
</dbReference>
<dbReference type="NCBIfam" id="TIGR03328">
    <property type="entry name" value="salvage_mtnB"/>
    <property type="match status" value="1"/>
</dbReference>
<dbReference type="PANTHER" id="PTHR10640">
    <property type="entry name" value="METHYLTHIORIBULOSE-1-PHOSPHATE DEHYDRATASE"/>
    <property type="match status" value="1"/>
</dbReference>
<dbReference type="PANTHER" id="PTHR10640:SF7">
    <property type="entry name" value="METHYLTHIORIBULOSE-1-PHOSPHATE DEHYDRATASE"/>
    <property type="match status" value="1"/>
</dbReference>
<dbReference type="Pfam" id="PF00596">
    <property type="entry name" value="Aldolase_II"/>
    <property type="match status" value="1"/>
</dbReference>
<dbReference type="SMART" id="SM01007">
    <property type="entry name" value="Aldolase_II"/>
    <property type="match status" value="1"/>
</dbReference>
<dbReference type="SUPFAM" id="SSF53639">
    <property type="entry name" value="AraD/HMP-PK domain-like"/>
    <property type="match status" value="1"/>
</dbReference>
<evidence type="ECO:0000255" key="1">
    <source>
        <dbReference type="HAMAP-Rule" id="MF_03116"/>
    </source>
</evidence>
<accession>B6K0X1</accession>
<proteinExistence type="inferred from homology"/>